<protein>
    <recommendedName>
        <fullName evidence="1">Holo-[acyl-carrier-protein] synthase</fullName>
        <shortName evidence="1">Holo-ACP synthase</shortName>
        <ecNumber evidence="1">2.7.8.7</ecNumber>
    </recommendedName>
    <alternativeName>
        <fullName evidence="1">4'-phosphopantetheinyl transferase AcpS</fullName>
    </alternativeName>
</protein>
<keyword id="KW-0963">Cytoplasm</keyword>
<keyword id="KW-0275">Fatty acid biosynthesis</keyword>
<keyword id="KW-0276">Fatty acid metabolism</keyword>
<keyword id="KW-0444">Lipid biosynthesis</keyword>
<keyword id="KW-0443">Lipid metabolism</keyword>
<keyword id="KW-0460">Magnesium</keyword>
<keyword id="KW-0479">Metal-binding</keyword>
<keyword id="KW-1185">Reference proteome</keyword>
<keyword id="KW-0808">Transferase</keyword>
<evidence type="ECO:0000255" key="1">
    <source>
        <dbReference type="HAMAP-Rule" id="MF_00101"/>
    </source>
</evidence>
<comment type="function">
    <text evidence="1">Transfers the 4'-phosphopantetheine moiety from coenzyme A to a Ser of acyl-carrier-protein.</text>
</comment>
<comment type="catalytic activity">
    <reaction evidence="1">
        <text>apo-[ACP] + CoA = holo-[ACP] + adenosine 3',5'-bisphosphate + H(+)</text>
        <dbReference type="Rhea" id="RHEA:12068"/>
        <dbReference type="Rhea" id="RHEA-COMP:9685"/>
        <dbReference type="Rhea" id="RHEA-COMP:9690"/>
        <dbReference type="ChEBI" id="CHEBI:15378"/>
        <dbReference type="ChEBI" id="CHEBI:29999"/>
        <dbReference type="ChEBI" id="CHEBI:57287"/>
        <dbReference type="ChEBI" id="CHEBI:58343"/>
        <dbReference type="ChEBI" id="CHEBI:64479"/>
        <dbReference type="EC" id="2.7.8.7"/>
    </reaction>
</comment>
<comment type="cofactor">
    <cofactor evidence="1">
        <name>Mg(2+)</name>
        <dbReference type="ChEBI" id="CHEBI:18420"/>
    </cofactor>
</comment>
<comment type="subcellular location">
    <subcellularLocation>
        <location evidence="1">Cytoplasm</location>
    </subcellularLocation>
</comment>
<comment type="similarity">
    <text evidence="1">Belongs to the P-Pant transferase superfamily. AcpS family.</text>
</comment>
<dbReference type="EC" id="2.7.8.7" evidence="1"/>
<dbReference type="EMBL" id="BA000004">
    <property type="protein sequence ID" value="BAB04237.1"/>
    <property type="molecule type" value="Genomic_DNA"/>
</dbReference>
<dbReference type="PIR" id="F83714">
    <property type="entry name" value="F83714"/>
</dbReference>
<dbReference type="RefSeq" id="WP_010896696.1">
    <property type="nucleotide sequence ID" value="NC_002570.2"/>
</dbReference>
<dbReference type="SMR" id="Q9KFG1"/>
<dbReference type="STRING" id="272558.gene:10726371"/>
<dbReference type="GeneID" id="87596076"/>
<dbReference type="KEGG" id="bha:BH0518"/>
<dbReference type="eggNOG" id="COG0736">
    <property type="taxonomic scope" value="Bacteria"/>
</dbReference>
<dbReference type="HOGENOM" id="CLU_089696_1_2_9"/>
<dbReference type="OrthoDB" id="517356at2"/>
<dbReference type="Proteomes" id="UP000001258">
    <property type="component" value="Chromosome"/>
</dbReference>
<dbReference type="GO" id="GO:0005829">
    <property type="term" value="C:cytosol"/>
    <property type="evidence" value="ECO:0007669"/>
    <property type="project" value="TreeGrafter"/>
</dbReference>
<dbReference type="GO" id="GO:0008897">
    <property type="term" value="F:holo-[acyl-carrier-protein] synthase activity"/>
    <property type="evidence" value="ECO:0007669"/>
    <property type="project" value="UniProtKB-UniRule"/>
</dbReference>
<dbReference type="GO" id="GO:0000287">
    <property type="term" value="F:magnesium ion binding"/>
    <property type="evidence" value="ECO:0007669"/>
    <property type="project" value="UniProtKB-UniRule"/>
</dbReference>
<dbReference type="GO" id="GO:0006633">
    <property type="term" value="P:fatty acid biosynthetic process"/>
    <property type="evidence" value="ECO:0007669"/>
    <property type="project" value="UniProtKB-UniRule"/>
</dbReference>
<dbReference type="GO" id="GO:0019878">
    <property type="term" value="P:lysine biosynthetic process via aminoadipic acid"/>
    <property type="evidence" value="ECO:0007669"/>
    <property type="project" value="TreeGrafter"/>
</dbReference>
<dbReference type="Gene3D" id="3.90.470.20">
    <property type="entry name" value="4'-phosphopantetheinyl transferase domain"/>
    <property type="match status" value="1"/>
</dbReference>
<dbReference type="HAMAP" id="MF_00101">
    <property type="entry name" value="AcpS"/>
    <property type="match status" value="1"/>
</dbReference>
<dbReference type="InterPro" id="IPR008278">
    <property type="entry name" value="4-PPantetheinyl_Trfase_dom"/>
</dbReference>
<dbReference type="InterPro" id="IPR037143">
    <property type="entry name" value="4-PPantetheinyl_Trfase_dom_sf"/>
</dbReference>
<dbReference type="InterPro" id="IPR002582">
    <property type="entry name" value="ACPS"/>
</dbReference>
<dbReference type="InterPro" id="IPR050559">
    <property type="entry name" value="P-Pant_transferase_sf"/>
</dbReference>
<dbReference type="InterPro" id="IPR004568">
    <property type="entry name" value="Ppantetheine-prot_Trfase_dom"/>
</dbReference>
<dbReference type="NCBIfam" id="TIGR00516">
    <property type="entry name" value="acpS"/>
    <property type="match status" value="1"/>
</dbReference>
<dbReference type="NCBIfam" id="TIGR00556">
    <property type="entry name" value="pantethn_trn"/>
    <property type="match status" value="1"/>
</dbReference>
<dbReference type="PANTHER" id="PTHR12215:SF10">
    <property type="entry name" value="L-AMINOADIPATE-SEMIALDEHYDE DEHYDROGENASE-PHOSPHOPANTETHEINYL TRANSFERASE"/>
    <property type="match status" value="1"/>
</dbReference>
<dbReference type="PANTHER" id="PTHR12215">
    <property type="entry name" value="PHOSPHOPANTETHEINE TRANSFERASE"/>
    <property type="match status" value="1"/>
</dbReference>
<dbReference type="Pfam" id="PF01648">
    <property type="entry name" value="ACPS"/>
    <property type="match status" value="1"/>
</dbReference>
<dbReference type="SUPFAM" id="SSF56214">
    <property type="entry name" value="4'-phosphopantetheinyl transferase"/>
    <property type="match status" value="1"/>
</dbReference>
<name>ACPS_HALH5</name>
<gene>
    <name evidence="1" type="primary">acpS</name>
    <name type="ordered locus">BH0518</name>
</gene>
<accession>Q9KFG1</accession>
<sequence length="119" mass="13421">MIIGTGIDIVELERIQSMVEKHPRFVKKILTENEQEVFARLSRRRRLEYIAGRFAAKEAFVKAVGTGISAEYGWHDLEVLSDERGKPVLSVNLDATIHVSISHSQSYAIAQVILERLSS</sequence>
<organism>
    <name type="scientific">Halalkalibacterium halodurans (strain ATCC BAA-125 / DSM 18197 / FERM 7344 / JCM 9153 / C-125)</name>
    <name type="common">Bacillus halodurans</name>
    <dbReference type="NCBI Taxonomy" id="272558"/>
    <lineage>
        <taxon>Bacteria</taxon>
        <taxon>Bacillati</taxon>
        <taxon>Bacillota</taxon>
        <taxon>Bacilli</taxon>
        <taxon>Bacillales</taxon>
        <taxon>Bacillaceae</taxon>
        <taxon>Halalkalibacterium (ex Joshi et al. 2022)</taxon>
    </lineage>
</organism>
<proteinExistence type="inferred from homology"/>
<feature type="chain" id="PRO_0000175610" description="Holo-[acyl-carrier-protein] synthase">
    <location>
        <begin position="1"/>
        <end position="119"/>
    </location>
</feature>
<feature type="binding site" evidence="1">
    <location>
        <position position="8"/>
    </location>
    <ligand>
        <name>Mg(2+)</name>
        <dbReference type="ChEBI" id="CHEBI:18420"/>
    </ligand>
</feature>
<feature type="binding site" evidence="1">
    <location>
        <position position="58"/>
    </location>
    <ligand>
        <name>Mg(2+)</name>
        <dbReference type="ChEBI" id="CHEBI:18420"/>
    </ligand>
</feature>
<reference key="1">
    <citation type="journal article" date="2000" name="Nucleic Acids Res.">
        <title>Complete genome sequence of the alkaliphilic bacterium Bacillus halodurans and genomic sequence comparison with Bacillus subtilis.</title>
        <authorList>
            <person name="Takami H."/>
            <person name="Nakasone K."/>
            <person name="Takaki Y."/>
            <person name="Maeno G."/>
            <person name="Sasaki R."/>
            <person name="Masui N."/>
            <person name="Fuji F."/>
            <person name="Hirama C."/>
            <person name="Nakamura Y."/>
            <person name="Ogasawara N."/>
            <person name="Kuhara S."/>
            <person name="Horikoshi K."/>
        </authorList>
    </citation>
    <scope>NUCLEOTIDE SEQUENCE [LARGE SCALE GENOMIC DNA]</scope>
    <source>
        <strain>ATCC BAA-125 / DSM 18197 / FERM 7344 / JCM 9153 / C-125</strain>
    </source>
</reference>